<accession>B5F7J8</accession>
<organism>
    <name type="scientific">Salmonella agona (strain SL483)</name>
    <dbReference type="NCBI Taxonomy" id="454166"/>
    <lineage>
        <taxon>Bacteria</taxon>
        <taxon>Pseudomonadati</taxon>
        <taxon>Pseudomonadota</taxon>
        <taxon>Gammaproteobacteria</taxon>
        <taxon>Enterobacterales</taxon>
        <taxon>Enterobacteriaceae</taxon>
        <taxon>Salmonella</taxon>
    </lineage>
</organism>
<keyword id="KW-0997">Cell inner membrane</keyword>
<keyword id="KW-1003">Cell membrane</keyword>
<keyword id="KW-0472">Membrane</keyword>
<keyword id="KW-0762">Sugar transport</keyword>
<keyword id="KW-0812">Transmembrane</keyword>
<keyword id="KW-1133">Transmembrane helix</keyword>
<keyword id="KW-0813">Transport</keyword>
<gene>
    <name evidence="1" type="primary">nanT</name>
    <name type="ordered locus">SeAg_B3529</name>
</gene>
<protein>
    <recommendedName>
        <fullName evidence="1">Sialic acid transporter NanT</fullName>
    </recommendedName>
    <alternativeName>
        <fullName evidence="1">Sialic acid permease</fullName>
    </alternativeName>
    <alternativeName>
        <fullName evidence="1">Sialic acid/H(+) symporter</fullName>
    </alternativeName>
</protein>
<proteinExistence type="inferred from homology"/>
<evidence type="ECO:0000255" key="1">
    <source>
        <dbReference type="HAMAP-Rule" id="MF_01238"/>
    </source>
</evidence>
<sequence>MSTSTQNIPWYRHLNRAQWRAFSAAWLGYLLDGFDFVLIALVLTEVQSEFGLTTVQAASLISAAFISRWFGGLLLGAMGDRYGRRLAMVSSIILFSVGTLACGFAPGYTTMFIARLVIGMGMAGEYGSSATYVIESWPKHLRNKASGFLISGFSVGAVVAAQVYSQVVPVWGWRALFFIGILPIIFALWLRKNIPEAEDWKEKHAGKAPVRTMVDILYRGEHRIINILMTFAAAAALWFCFAGNLQNAAIVAGLGLLCAVIFISFMVQSSGKRWPTGVMLMLVVLFAFLYSWPIQALLPTYLKTELAYDPHTVANVLFFSGFGAAVGCCVGGFLGDWLGTRKAYVCSLLASQILIIPVFAIGGTNVWVLGLLLFFQQMLGQGIAGILPKLIGGYFDTDQRAAGLGFTYNVGALGGALAPILGALIAQRLDLGTALASLSFSLTFVVILLIGLDMPSRVQRWLRPEALRTHDAIDDKPFSGAVPLGSGKGAFVKTKS</sequence>
<name>NANT_SALA4</name>
<reference key="1">
    <citation type="journal article" date="2011" name="J. Bacteriol.">
        <title>Comparative genomics of 28 Salmonella enterica isolates: evidence for CRISPR-mediated adaptive sublineage evolution.</title>
        <authorList>
            <person name="Fricke W.F."/>
            <person name="Mammel M.K."/>
            <person name="McDermott P.F."/>
            <person name="Tartera C."/>
            <person name="White D.G."/>
            <person name="Leclerc J.E."/>
            <person name="Ravel J."/>
            <person name="Cebula T.A."/>
        </authorList>
    </citation>
    <scope>NUCLEOTIDE SEQUENCE [LARGE SCALE GENOMIC DNA]</scope>
    <source>
        <strain>SL483</strain>
    </source>
</reference>
<feature type="chain" id="PRO_1000214055" description="Sialic acid transporter NanT">
    <location>
        <begin position="1"/>
        <end position="496"/>
    </location>
</feature>
<feature type="transmembrane region" description="Helical" evidence="1">
    <location>
        <begin position="22"/>
        <end position="42"/>
    </location>
</feature>
<feature type="transmembrane region" description="Helical" evidence="1">
    <location>
        <begin position="58"/>
        <end position="78"/>
    </location>
</feature>
<feature type="transmembrane region" description="Helical" evidence="1">
    <location>
        <begin position="86"/>
        <end position="106"/>
    </location>
</feature>
<feature type="transmembrane region" description="Helical" evidence="1">
    <location>
        <begin position="116"/>
        <end position="136"/>
    </location>
</feature>
<feature type="transmembrane region" description="Helical" evidence="1">
    <location>
        <begin position="148"/>
        <end position="168"/>
    </location>
</feature>
<feature type="transmembrane region" description="Helical" evidence="1">
    <location>
        <begin position="170"/>
        <end position="190"/>
    </location>
</feature>
<feature type="transmembrane region" description="Helical" evidence="1">
    <location>
        <begin position="224"/>
        <end position="244"/>
    </location>
</feature>
<feature type="transmembrane region" description="Helical" evidence="1">
    <location>
        <begin position="247"/>
        <end position="267"/>
    </location>
</feature>
<feature type="transmembrane region" description="Helical" evidence="1">
    <location>
        <begin position="278"/>
        <end position="298"/>
    </location>
</feature>
<feature type="transmembrane region" description="Helical" evidence="1">
    <location>
        <begin position="313"/>
        <end position="333"/>
    </location>
</feature>
<feature type="transmembrane region" description="Helical" evidence="1">
    <location>
        <begin position="353"/>
        <end position="373"/>
    </location>
</feature>
<feature type="transmembrane region" description="Helical" evidence="1">
    <location>
        <begin position="374"/>
        <end position="394"/>
    </location>
</feature>
<feature type="transmembrane region" description="Helical" evidence="1">
    <location>
        <begin position="406"/>
        <end position="426"/>
    </location>
</feature>
<feature type="transmembrane region" description="Helical" evidence="1">
    <location>
        <begin position="431"/>
        <end position="451"/>
    </location>
</feature>
<dbReference type="EMBL" id="CP001138">
    <property type="protein sequence ID" value="ACH51287.1"/>
    <property type="molecule type" value="Genomic_DNA"/>
</dbReference>
<dbReference type="RefSeq" id="WP_000108078.1">
    <property type="nucleotide sequence ID" value="NC_011149.1"/>
</dbReference>
<dbReference type="SMR" id="B5F7J8"/>
<dbReference type="KEGG" id="sea:SeAg_B3529"/>
<dbReference type="HOGENOM" id="CLU_001265_46_8_6"/>
<dbReference type="Proteomes" id="UP000008819">
    <property type="component" value="Chromosome"/>
</dbReference>
<dbReference type="GO" id="GO:0005886">
    <property type="term" value="C:plasma membrane"/>
    <property type="evidence" value="ECO:0007669"/>
    <property type="project" value="UniProtKB-SubCell"/>
</dbReference>
<dbReference type="GO" id="GO:0046943">
    <property type="term" value="F:carboxylic acid transmembrane transporter activity"/>
    <property type="evidence" value="ECO:0007669"/>
    <property type="project" value="TreeGrafter"/>
</dbReference>
<dbReference type="GO" id="GO:0015538">
    <property type="term" value="F:sialic acid:proton symporter activity"/>
    <property type="evidence" value="ECO:0007669"/>
    <property type="project" value="UniProtKB-UniRule"/>
</dbReference>
<dbReference type="CDD" id="cd17316">
    <property type="entry name" value="MFS_SV2_like"/>
    <property type="match status" value="1"/>
</dbReference>
<dbReference type="FunFam" id="1.20.1250.20:FF:000027">
    <property type="entry name" value="Sialic acid transporter NanT"/>
    <property type="match status" value="1"/>
</dbReference>
<dbReference type="FunFam" id="1.20.1250.20:FF:000038">
    <property type="entry name" value="Sialic acid transporter NanT"/>
    <property type="match status" value="1"/>
</dbReference>
<dbReference type="Gene3D" id="1.20.1250.20">
    <property type="entry name" value="MFS general substrate transporter like domains"/>
    <property type="match status" value="2"/>
</dbReference>
<dbReference type="HAMAP" id="MF_01238">
    <property type="entry name" value="MFS_NanT"/>
    <property type="match status" value="1"/>
</dbReference>
<dbReference type="InterPro" id="IPR011701">
    <property type="entry name" value="MFS"/>
</dbReference>
<dbReference type="InterPro" id="IPR020846">
    <property type="entry name" value="MFS_dom"/>
</dbReference>
<dbReference type="InterPro" id="IPR036259">
    <property type="entry name" value="MFS_trans_sf"/>
</dbReference>
<dbReference type="InterPro" id="IPR004742">
    <property type="entry name" value="SA_transporter"/>
</dbReference>
<dbReference type="NCBIfam" id="TIGR00891">
    <property type="entry name" value="2A0112"/>
    <property type="match status" value="1"/>
</dbReference>
<dbReference type="NCBIfam" id="NF003024">
    <property type="entry name" value="PRK03893.1"/>
    <property type="match status" value="1"/>
</dbReference>
<dbReference type="PANTHER" id="PTHR23508">
    <property type="entry name" value="CARBOXYLIC ACID TRANSPORTER PROTEIN HOMOLOG"/>
    <property type="match status" value="1"/>
</dbReference>
<dbReference type="PANTHER" id="PTHR23508:SF3">
    <property type="entry name" value="SIALIC ACID TRANSPORTER NANT"/>
    <property type="match status" value="1"/>
</dbReference>
<dbReference type="Pfam" id="PF07690">
    <property type="entry name" value="MFS_1"/>
    <property type="match status" value="1"/>
</dbReference>
<dbReference type="SUPFAM" id="SSF103473">
    <property type="entry name" value="MFS general substrate transporter"/>
    <property type="match status" value="1"/>
</dbReference>
<dbReference type="PROSITE" id="PS50850">
    <property type="entry name" value="MFS"/>
    <property type="match status" value="1"/>
</dbReference>
<comment type="function">
    <text evidence="1">Catalyzes the proton-dependent transport of sialic acid.</text>
</comment>
<comment type="catalytic activity">
    <reaction evidence="1">
        <text>N-acetylneuraminate(in) + H(+)(in) = N-acetylneuraminate(out) + H(+)(out)</text>
        <dbReference type="Rhea" id="RHEA:28987"/>
        <dbReference type="ChEBI" id="CHEBI:15378"/>
        <dbReference type="ChEBI" id="CHEBI:35418"/>
    </reaction>
</comment>
<comment type="subcellular location">
    <subcellularLocation>
        <location evidence="1">Cell inner membrane</location>
        <topology evidence="1">Multi-pass membrane protein</topology>
    </subcellularLocation>
</comment>
<comment type="similarity">
    <text evidence="1">Belongs to the major facilitator superfamily. Sialate:H(+) symporter (SHS) (TC 2.A.1.12) family.</text>
</comment>